<evidence type="ECO:0000250" key="1">
    <source>
        <dbReference type="UniProtKB" id="P69820"/>
    </source>
</evidence>
<evidence type="ECO:0000255" key="2">
    <source>
        <dbReference type="PROSITE-ProRule" id="PRU00417"/>
    </source>
</evidence>
<evidence type="ECO:0000305" key="3"/>
<protein>
    <recommendedName>
        <fullName evidence="1">Ascorbate-specific PTS system EIIA component</fullName>
    </recommendedName>
    <alternativeName>
        <fullName evidence="1">Ascorbate-specific phosphotransferase enzyme IIA component</fullName>
    </alternativeName>
</protein>
<name>ULAC_SHISS</name>
<feature type="chain" id="PRO_0000230321" description="Ascorbate-specific PTS system EIIA component">
    <location>
        <begin position="1"/>
        <end position="154"/>
    </location>
</feature>
<feature type="domain" description="PTS EIIA type-2" evidence="2">
    <location>
        <begin position="6"/>
        <end position="150"/>
    </location>
</feature>
<feature type="active site" description="Tele-phosphohistidine intermediate" evidence="2">
    <location>
        <position position="68"/>
    </location>
</feature>
<feature type="modified residue" description="Phosphohistidine" evidence="1">
    <location>
        <position position="68"/>
    </location>
</feature>
<sequence length="154" mass="17226">MKLRDSLAENKSIRLQAEAETWQDAVKIGVDLLVAADVVEPRYYQAILDAVEQHGPYFVLAPGLAMPHGRPEEGVKKTGFALVTLKKPLEFNHEDNDPVDILITMAAVDANTHQEVGIMQIVNLFEDEENFDRLRACRTEQEVLDLIDRTNAAA</sequence>
<comment type="function">
    <text evidence="1">The phosphoenolpyruvate-dependent sugar phosphotransferase system (sugar PTS), a major carbohydrate active transport system, catalyzes the phosphorylation of incoming sugar substrates concomitantly with their translocation across the cell membrane. The enzyme II UlaABC PTS system is involved in ascorbate transport.</text>
</comment>
<comment type="subcellular location">
    <subcellularLocation>
        <location evidence="3">Cytoplasm</location>
    </subcellularLocation>
</comment>
<comment type="induction">
    <text evidence="1">Induced by L-ascorbate. Repressed by UlaR.</text>
</comment>
<comment type="domain">
    <text evidence="2">The PTS EIIA type-2 domain is phosphorylated by phospho-HPr on a histidyl residue. Then, it transfers the phosphoryl group to the PTS EIIB type-2 domain.</text>
</comment>
<organism>
    <name type="scientific">Shigella sonnei (strain Ss046)</name>
    <dbReference type="NCBI Taxonomy" id="300269"/>
    <lineage>
        <taxon>Bacteria</taxon>
        <taxon>Pseudomonadati</taxon>
        <taxon>Pseudomonadota</taxon>
        <taxon>Gammaproteobacteria</taxon>
        <taxon>Enterobacterales</taxon>
        <taxon>Enterobacteriaceae</taxon>
        <taxon>Shigella</taxon>
    </lineage>
</organism>
<accession>Q3YUF3</accession>
<dbReference type="EMBL" id="CP000038">
    <property type="protein sequence ID" value="AAZ90859.1"/>
    <property type="molecule type" value="Genomic_DNA"/>
</dbReference>
<dbReference type="RefSeq" id="WP_000776505.1">
    <property type="nucleotide sequence ID" value="NC_007384.1"/>
</dbReference>
<dbReference type="SMR" id="Q3YUF3"/>
<dbReference type="GeneID" id="75059164"/>
<dbReference type="KEGG" id="ssn:SSON_4377"/>
<dbReference type="HOGENOM" id="CLU_072531_2_0_6"/>
<dbReference type="Proteomes" id="UP000002529">
    <property type="component" value="Chromosome"/>
</dbReference>
<dbReference type="GO" id="GO:0005737">
    <property type="term" value="C:cytoplasm"/>
    <property type="evidence" value="ECO:0007669"/>
    <property type="project" value="UniProtKB-SubCell"/>
</dbReference>
<dbReference type="GO" id="GO:0016301">
    <property type="term" value="F:kinase activity"/>
    <property type="evidence" value="ECO:0007669"/>
    <property type="project" value="UniProtKB-KW"/>
</dbReference>
<dbReference type="GO" id="GO:0009401">
    <property type="term" value="P:phosphoenolpyruvate-dependent sugar phosphotransferase system"/>
    <property type="evidence" value="ECO:0007669"/>
    <property type="project" value="UniProtKB-KW"/>
</dbReference>
<dbReference type="CDD" id="cd00211">
    <property type="entry name" value="PTS_IIA_fru"/>
    <property type="match status" value="1"/>
</dbReference>
<dbReference type="FunFam" id="3.40.930.10:FF:000005">
    <property type="entry name" value="Ascorbate-specific phosphotransferase enzyme IIA component"/>
    <property type="match status" value="1"/>
</dbReference>
<dbReference type="Gene3D" id="3.40.930.10">
    <property type="entry name" value="Mannitol-specific EII, Chain A"/>
    <property type="match status" value="1"/>
</dbReference>
<dbReference type="InterPro" id="IPR051351">
    <property type="entry name" value="Ascorbate-PTS_EIIA_comp"/>
</dbReference>
<dbReference type="InterPro" id="IPR016152">
    <property type="entry name" value="PTrfase/Anion_transptr"/>
</dbReference>
<dbReference type="InterPro" id="IPR002178">
    <property type="entry name" value="PTS_EIIA_type-2_dom"/>
</dbReference>
<dbReference type="NCBIfam" id="NF007694">
    <property type="entry name" value="PRK10372.1"/>
    <property type="match status" value="1"/>
</dbReference>
<dbReference type="PANTHER" id="PTHR36203">
    <property type="entry name" value="ASCORBATE-SPECIFIC PTS SYSTEM EIIA COMPONENT"/>
    <property type="match status" value="1"/>
</dbReference>
<dbReference type="PANTHER" id="PTHR36203:SF1">
    <property type="entry name" value="ASCORBATE-SPECIFIC PTS SYSTEM EIIA COMPONENT"/>
    <property type="match status" value="1"/>
</dbReference>
<dbReference type="Pfam" id="PF00359">
    <property type="entry name" value="PTS_EIIA_2"/>
    <property type="match status" value="1"/>
</dbReference>
<dbReference type="SUPFAM" id="SSF55804">
    <property type="entry name" value="Phoshotransferase/anion transport protein"/>
    <property type="match status" value="1"/>
</dbReference>
<dbReference type="PROSITE" id="PS51094">
    <property type="entry name" value="PTS_EIIA_TYPE_2"/>
    <property type="match status" value="1"/>
</dbReference>
<dbReference type="PROSITE" id="PS00372">
    <property type="entry name" value="PTS_EIIA_TYPE_2_HIS"/>
    <property type="match status" value="1"/>
</dbReference>
<proteinExistence type="inferred from homology"/>
<gene>
    <name type="primary">ulaC</name>
    <name type="ordered locus">SSON_4377</name>
</gene>
<keyword id="KW-0963">Cytoplasm</keyword>
<keyword id="KW-0418">Kinase</keyword>
<keyword id="KW-0597">Phosphoprotein</keyword>
<keyword id="KW-0598">Phosphotransferase system</keyword>
<keyword id="KW-1185">Reference proteome</keyword>
<keyword id="KW-0808">Transferase</keyword>
<keyword id="KW-0813">Transport</keyword>
<reference key="1">
    <citation type="journal article" date="2005" name="Nucleic Acids Res.">
        <title>Genome dynamics and diversity of Shigella species, the etiologic agents of bacillary dysentery.</title>
        <authorList>
            <person name="Yang F."/>
            <person name="Yang J."/>
            <person name="Zhang X."/>
            <person name="Chen L."/>
            <person name="Jiang Y."/>
            <person name="Yan Y."/>
            <person name="Tang X."/>
            <person name="Wang J."/>
            <person name="Xiong Z."/>
            <person name="Dong J."/>
            <person name="Xue Y."/>
            <person name="Zhu Y."/>
            <person name="Xu X."/>
            <person name="Sun L."/>
            <person name="Chen S."/>
            <person name="Nie H."/>
            <person name="Peng J."/>
            <person name="Xu J."/>
            <person name="Wang Y."/>
            <person name="Yuan Z."/>
            <person name="Wen Y."/>
            <person name="Yao Z."/>
            <person name="Shen Y."/>
            <person name="Qiang B."/>
            <person name="Hou Y."/>
            <person name="Yu J."/>
            <person name="Jin Q."/>
        </authorList>
    </citation>
    <scope>NUCLEOTIDE SEQUENCE [LARGE SCALE GENOMIC DNA]</scope>
    <source>
        <strain>Ss046</strain>
    </source>
</reference>